<gene>
    <name evidence="1" type="primary">dnaJ</name>
    <name type="ordered locus">PFLU_5268</name>
</gene>
<proteinExistence type="inferred from homology"/>
<accession>C3K274</accession>
<feature type="chain" id="PRO_1000213689" description="Chaperone protein DnaJ">
    <location>
        <begin position="1"/>
        <end position="374"/>
    </location>
</feature>
<feature type="domain" description="J" evidence="1">
    <location>
        <begin position="5"/>
        <end position="70"/>
    </location>
</feature>
<feature type="repeat" description="CXXCXGXG motif">
    <location>
        <begin position="146"/>
        <end position="153"/>
    </location>
</feature>
<feature type="repeat" description="CXXCXGXG motif">
    <location>
        <begin position="163"/>
        <end position="170"/>
    </location>
</feature>
<feature type="repeat" description="CXXCXGXG motif">
    <location>
        <begin position="185"/>
        <end position="192"/>
    </location>
</feature>
<feature type="repeat" description="CXXCXGXG motif">
    <location>
        <begin position="199"/>
        <end position="206"/>
    </location>
</feature>
<feature type="zinc finger region" description="CR-type" evidence="1">
    <location>
        <begin position="133"/>
        <end position="211"/>
    </location>
</feature>
<feature type="binding site" evidence="1">
    <location>
        <position position="146"/>
    </location>
    <ligand>
        <name>Zn(2+)</name>
        <dbReference type="ChEBI" id="CHEBI:29105"/>
        <label>1</label>
    </ligand>
</feature>
<feature type="binding site" evidence="1">
    <location>
        <position position="149"/>
    </location>
    <ligand>
        <name>Zn(2+)</name>
        <dbReference type="ChEBI" id="CHEBI:29105"/>
        <label>1</label>
    </ligand>
</feature>
<feature type="binding site" evidence="1">
    <location>
        <position position="163"/>
    </location>
    <ligand>
        <name>Zn(2+)</name>
        <dbReference type="ChEBI" id="CHEBI:29105"/>
        <label>2</label>
    </ligand>
</feature>
<feature type="binding site" evidence="1">
    <location>
        <position position="166"/>
    </location>
    <ligand>
        <name>Zn(2+)</name>
        <dbReference type="ChEBI" id="CHEBI:29105"/>
        <label>2</label>
    </ligand>
</feature>
<feature type="binding site" evidence="1">
    <location>
        <position position="185"/>
    </location>
    <ligand>
        <name>Zn(2+)</name>
        <dbReference type="ChEBI" id="CHEBI:29105"/>
        <label>2</label>
    </ligand>
</feature>
<feature type="binding site" evidence="1">
    <location>
        <position position="188"/>
    </location>
    <ligand>
        <name>Zn(2+)</name>
        <dbReference type="ChEBI" id="CHEBI:29105"/>
        <label>2</label>
    </ligand>
</feature>
<feature type="binding site" evidence="1">
    <location>
        <position position="199"/>
    </location>
    <ligand>
        <name>Zn(2+)</name>
        <dbReference type="ChEBI" id="CHEBI:29105"/>
        <label>1</label>
    </ligand>
</feature>
<feature type="binding site" evidence="1">
    <location>
        <position position="202"/>
    </location>
    <ligand>
        <name>Zn(2+)</name>
        <dbReference type="ChEBI" id="CHEBI:29105"/>
        <label>1</label>
    </ligand>
</feature>
<protein>
    <recommendedName>
        <fullName evidence="1">Chaperone protein DnaJ</fullName>
    </recommendedName>
</protein>
<evidence type="ECO:0000255" key="1">
    <source>
        <dbReference type="HAMAP-Rule" id="MF_01152"/>
    </source>
</evidence>
<organism>
    <name type="scientific">Pseudomonas fluorescens (strain SBW25)</name>
    <dbReference type="NCBI Taxonomy" id="216595"/>
    <lineage>
        <taxon>Bacteria</taxon>
        <taxon>Pseudomonadati</taxon>
        <taxon>Pseudomonadota</taxon>
        <taxon>Gammaproteobacteria</taxon>
        <taxon>Pseudomonadales</taxon>
        <taxon>Pseudomonadaceae</taxon>
        <taxon>Pseudomonas</taxon>
    </lineage>
</organism>
<keyword id="KW-0143">Chaperone</keyword>
<keyword id="KW-0963">Cytoplasm</keyword>
<keyword id="KW-0235">DNA replication</keyword>
<keyword id="KW-0479">Metal-binding</keyword>
<keyword id="KW-0677">Repeat</keyword>
<keyword id="KW-0346">Stress response</keyword>
<keyword id="KW-0862">Zinc</keyword>
<keyword id="KW-0863">Zinc-finger</keyword>
<dbReference type="EMBL" id="AM181176">
    <property type="protein sequence ID" value="CAY52372.1"/>
    <property type="molecule type" value="Genomic_DNA"/>
</dbReference>
<dbReference type="RefSeq" id="WP_015885930.1">
    <property type="nucleotide sequence ID" value="NC_012660.1"/>
</dbReference>
<dbReference type="SMR" id="C3K274"/>
<dbReference type="STRING" id="294.SRM1_00810"/>
<dbReference type="GeneID" id="93466899"/>
<dbReference type="eggNOG" id="COG0484">
    <property type="taxonomic scope" value="Bacteria"/>
</dbReference>
<dbReference type="HOGENOM" id="CLU_017633_0_7_6"/>
<dbReference type="OrthoDB" id="9779889at2"/>
<dbReference type="GO" id="GO:0005737">
    <property type="term" value="C:cytoplasm"/>
    <property type="evidence" value="ECO:0007669"/>
    <property type="project" value="UniProtKB-SubCell"/>
</dbReference>
<dbReference type="GO" id="GO:0005524">
    <property type="term" value="F:ATP binding"/>
    <property type="evidence" value="ECO:0007669"/>
    <property type="project" value="InterPro"/>
</dbReference>
<dbReference type="GO" id="GO:0031072">
    <property type="term" value="F:heat shock protein binding"/>
    <property type="evidence" value="ECO:0007669"/>
    <property type="project" value="InterPro"/>
</dbReference>
<dbReference type="GO" id="GO:0051082">
    <property type="term" value="F:unfolded protein binding"/>
    <property type="evidence" value="ECO:0007669"/>
    <property type="project" value="UniProtKB-UniRule"/>
</dbReference>
<dbReference type="GO" id="GO:0008270">
    <property type="term" value="F:zinc ion binding"/>
    <property type="evidence" value="ECO:0007669"/>
    <property type="project" value="UniProtKB-UniRule"/>
</dbReference>
<dbReference type="GO" id="GO:0051085">
    <property type="term" value="P:chaperone cofactor-dependent protein refolding"/>
    <property type="evidence" value="ECO:0007669"/>
    <property type="project" value="TreeGrafter"/>
</dbReference>
<dbReference type="GO" id="GO:0006260">
    <property type="term" value="P:DNA replication"/>
    <property type="evidence" value="ECO:0007669"/>
    <property type="project" value="UniProtKB-KW"/>
</dbReference>
<dbReference type="GO" id="GO:0042026">
    <property type="term" value="P:protein refolding"/>
    <property type="evidence" value="ECO:0007669"/>
    <property type="project" value="TreeGrafter"/>
</dbReference>
<dbReference type="GO" id="GO:0009408">
    <property type="term" value="P:response to heat"/>
    <property type="evidence" value="ECO:0007669"/>
    <property type="project" value="InterPro"/>
</dbReference>
<dbReference type="CDD" id="cd06257">
    <property type="entry name" value="DnaJ"/>
    <property type="match status" value="1"/>
</dbReference>
<dbReference type="CDD" id="cd10747">
    <property type="entry name" value="DnaJ_C"/>
    <property type="match status" value="1"/>
</dbReference>
<dbReference type="CDD" id="cd10719">
    <property type="entry name" value="DnaJ_zf"/>
    <property type="match status" value="1"/>
</dbReference>
<dbReference type="FunFam" id="1.10.287.110:FF:000051">
    <property type="entry name" value="Molecular chaperone DnaJ"/>
    <property type="match status" value="1"/>
</dbReference>
<dbReference type="FunFam" id="2.10.230.10:FF:000002">
    <property type="entry name" value="Molecular chaperone DnaJ"/>
    <property type="match status" value="1"/>
</dbReference>
<dbReference type="FunFam" id="2.60.260.20:FF:000004">
    <property type="entry name" value="Molecular chaperone DnaJ"/>
    <property type="match status" value="1"/>
</dbReference>
<dbReference type="Gene3D" id="1.10.287.110">
    <property type="entry name" value="DnaJ domain"/>
    <property type="match status" value="1"/>
</dbReference>
<dbReference type="Gene3D" id="2.10.230.10">
    <property type="entry name" value="Heat shock protein DnaJ, cysteine-rich domain"/>
    <property type="match status" value="1"/>
</dbReference>
<dbReference type="Gene3D" id="2.60.260.20">
    <property type="entry name" value="Urease metallochaperone UreE, N-terminal domain"/>
    <property type="match status" value="2"/>
</dbReference>
<dbReference type="HAMAP" id="MF_01152">
    <property type="entry name" value="DnaJ"/>
    <property type="match status" value="1"/>
</dbReference>
<dbReference type="InterPro" id="IPR012724">
    <property type="entry name" value="DnaJ"/>
</dbReference>
<dbReference type="InterPro" id="IPR002939">
    <property type="entry name" value="DnaJ_C"/>
</dbReference>
<dbReference type="InterPro" id="IPR001623">
    <property type="entry name" value="DnaJ_domain"/>
</dbReference>
<dbReference type="InterPro" id="IPR018253">
    <property type="entry name" value="DnaJ_domain_CS"/>
</dbReference>
<dbReference type="InterPro" id="IPR008971">
    <property type="entry name" value="HSP40/DnaJ_pept-bd"/>
</dbReference>
<dbReference type="InterPro" id="IPR001305">
    <property type="entry name" value="HSP_DnaJ_Cys-rich_dom"/>
</dbReference>
<dbReference type="InterPro" id="IPR036410">
    <property type="entry name" value="HSP_DnaJ_Cys-rich_dom_sf"/>
</dbReference>
<dbReference type="InterPro" id="IPR036869">
    <property type="entry name" value="J_dom_sf"/>
</dbReference>
<dbReference type="NCBIfam" id="TIGR02349">
    <property type="entry name" value="DnaJ_bact"/>
    <property type="match status" value="1"/>
</dbReference>
<dbReference type="NCBIfam" id="NF008035">
    <property type="entry name" value="PRK10767.1"/>
    <property type="match status" value="1"/>
</dbReference>
<dbReference type="PANTHER" id="PTHR43096:SF48">
    <property type="entry name" value="CHAPERONE PROTEIN DNAJ"/>
    <property type="match status" value="1"/>
</dbReference>
<dbReference type="PANTHER" id="PTHR43096">
    <property type="entry name" value="DNAJ HOMOLOG 1, MITOCHONDRIAL-RELATED"/>
    <property type="match status" value="1"/>
</dbReference>
<dbReference type="Pfam" id="PF00226">
    <property type="entry name" value="DnaJ"/>
    <property type="match status" value="1"/>
</dbReference>
<dbReference type="Pfam" id="PF01556">
    <property type="entry name" value="DnaJ_C"/>
    <property type="match status" value="1"/>
</dbReference>
<dbReference type="Pfam" id="PF00684">
    <property type="entry name" value="DnaJ_CXXCXGXG"/>
    <property type="match status" value="1"/>
</dbReference>
<dbReference type="PRINTS" id="PR00625">
    <property type="entry name" value="JDOMAIN"/>
</dbReference>
<dbReference type="SMART" id="SM00271">
    <property type="entry name" value="DnaJ"/>
    <property type="match status" value="1"/>
</dbReference>
<dbReference type="SUPFAM" id="SSF46565">
    <property type="entry name" value="Chaperone J-domain"/>
    <property type="match status" value="1"/>
</dbReference>
<dbReference type="SUPFAM" id="SSF57938">
    <property type="entry name" value="DnaJ/Hsp40 cysteine-rich domain"/>
    <property type="match status" value="1"/>
</dbReference>
<dbReference type="SUPFAM" id="SSF49493">
    <property type="entry name" value="HSP40/DnaJ peptide-binding domain"/>
    <property type="match status" value="2"/>
</dbReference>
<dbReference type="PROSITE" id="PS00636">
    <property type="entry name" value="DNAJ_1"/>
    <property type="match status" value="1"/>
</dbReference>
<dbReference type="PROSITE" id="PS50076">
    <property type="entry name" value="DNAJ_2"/>
    <property type="match status" value="1"/>
</dbReference>
<dbReference type="PROSITE" id="PS51188">
    <property type="entry name" value="ZF_CR"/>
    <property type="match status" value="1"/>
</dbReference>
<sequence length="374" mass="40340">MAKRDYYEVLGVERGSSEADLKKAYRRLAMKHHPDRNPDSKESEEMFKEANEAYECLSDPNKRAAYDQYGHAGVDPSMGGGGAGFGGQNFSDIFGDVFSDFFGGGRGGQRGGAQRGSDLRYTLELNLEEAVRGTSVNIRVPTLVNCKPCDGSGAKKGSSPITCPTCGGIGQVRMQQGFFSVQQTCPRCHGQGKIISDPCDSCHGEGRVEEYKTLSVKVPAGVDTGDRIRLSGEGEAGTQGGPTGDLYVVINVREHSIFQRDGKHLFCEVPISFVDAALGGELEIPTLDGRVKLKIPEGTQTGKQFRIRGKGVAPVRGGGAGDLMCRVAVETPVNLGRRQRELLEEFRSSLEGDDSHSPKTTGFFDGVKRFFGDL</sequence>
<name>DNAJ_PSEFS</name>
<reference key="1">
    <citation type="journal article" date="2009" name="Genome Biol.">
        <title>Genomic and genetic analyses of diversity and plant interactions of Pseudomonas fluorescens.</title>
        <authorList>
            <person name="Silby M.W."/>
            <person name="Cerdeno-Tarraga A.M."/>
            <person name="Vernikos G.S."/>
            <person name="Giddens S.R."/>
            <person name="Jackson R.W."/>
            <person name="Preston G.M."/>
            <person name="Zhang X.-X."/>
            <person name="Moon C.D."/>
            <person name="Gehrig S.M."/>
            <person name="Godfrey S.A.C."/>
            <person name="Knight C.G."/>
            <person name="Malone J.G."/>
            <person name="Robinson Z."/>
            <person name="Spiers A.J."/>
            <person name="Harris S."/>
            <person name="Challis G.L."/>
            <person name="Yaxley A.M."/>
            <person name="Harris D."/>
            <person name="Seeger K."/>
            <person name="Murphy L."/>
            <person name="Rutter S."/>
            <person name="Squares R."/>
            <person name="Quail M.A."/>
            <person name="Saunders E."/>
            <person name="Mavromatis K."/>
            <person name="Brettin T.S."/>
            <person name="Bentley S.D."/>
            <person name="Hothersall J."/>
            <person name="Stephens E."/>
            <person name="Thomas C.M."/>
            <person name="Parkhill J."/>
            <person name="Levy S.B."/>
            <person name="Rainey P.B."/>
            <person name="Thomson N.R."/>
        </authorList>
    </citation>
    <scope>NUCLEOTIDE SEQUENCE [LARGE SCALE GENOMIC DNA]</scope>
    <source>
        <strain>SBW25</strain>
    </source>
</reference>
<comment type="function">
    <text evidence="1">Participates actively in the response to hyperosmotic and heat shock by preventing the aggregation of stress-denatured proteins and by disaggregating proteins, also in an autonomous, DnaK-independent fashion. Unfolded proteins bind initially to DnaJ; upon interaction with the DnaJ-bound protein, DnaK hydrolyzes its bound ATP, resulting in the formation of a stable complex. GrpE releases ADP from DnaK; ATP binding to DnaK triggers the release of the substrate protein, thus completing the reaction cycle. Several rounds of ATP-dependent interactions between DnaJ, DnaK and GrpE are required for fully efficient folding. Also involved, together with DnaK and GrpE, in the DNA replication of plasmids through activation of initiation proteins.</text>
</comment>
<comment type="cofactor">
    <cofactor evidence="1">
        <name>Zn(2+)</name>
        <dbReference type="ChEBI" id="CHEBI:29105"/>
    </cofactor>
    <text evidence="1">Binds 2 Zn(2+) ions per monomer.</text>
</comment>
<comment type="subunit">
    <text evidence="1">Homodimer.</text>
</comment>
<comment type="subcellular location">
    <subcellularLocation>
        <location evidence="1">Cytoplasm</location>
    </subcellularLocation>
</comment>
<comment type="domain">
    <text evidence="1">The J domain is necessary and sufficient to stimulate DnaK ATPase activity. Zinc center 1 plays an important role in the autonomous, DnaK-independent chaperone activity of DnaJ. Zinc center 2 is essential for interaction with DnaK and for DnaJ activity.</text>
</comment>
<comment type="similarity">
    <text evidence="1">Belongs to the DnaJ family.</text>
</comment>